<name>DAPA_PSYA2</name>
<keyword id="KW-0028">Amino-acid biosynthesis</keyword>
<keyword id="KW-0963">Cytoplasm</keyword>
<keyword id="KW-0220">Diaminopimelate biosynthesis</keyword>
<keyword id="KW-0456">Lyase</keyword>
<keyword id="KW-0457">Lysine biosynthesis</keyword>
<keyword id="KW-1185">Reference proteome</keyword>
<keyword id="KW-0704">Schiff base</keyword>
<dbReference type="EC" id="4.3.3.7" evidence="1"/>
<dbReference type="EMBL" id="CP000082">
    <property type="protein sequence ID" value="AAZ18022.1"/>
    <property type="molecule type" value="Genomic_DNA"/>
</dbReference>
<dbReference type="RefSeq" id="WP_011279461.1">
    <property type="nucleotide sequence ID" value="NC_007204.1"/>
</dbReference>
<dbReference type="SMR" id="Q4FVD6"/>
<dbReference type="STRING" id="259536.Psyc_0148"/>
<dbReference type="KEGG" id="par:Psyc_0148"/>
<dbReference type="eggNOG" id="COG0329">
    <property type="taxonomic scope" value="Bacteria"/>
</dbReference>
<dbReference type="HOGENOM" id="CLU_049343_7_1_6"/>
<dbReference type="OrthoDB" id="9782828at2"/>
<dbReference type="UniPathway" id="UPA00034">
    <property type="reaction ID" value="UER00017"/>
</dbReference>
<dbReference type="Proteomes" id="UP000000546">
    <property type="component" value="Chromosome"/>
</dbReference>
<dbReference type="GO" id="GO:0005829">
    <property type="term" value="C:cytosol"/>
    <property type="evidence" value="ECO:0007669"/>
    <property type="project" value="TreeGrafter"/>
</dbReference>
<dbReference type="GO" id="GO:0008840">
    <property type="term" value="F:4-hydroxy-tetrahydrodipicolinate synthase activity"/>
    <property type="evidence" value="ECO:0007669"/>
    <property type="project" value="UniProtKB-UniRule"/>
</dbReference>
<dbReference type="GO" id="GO:0019877">
    <property type="term" value="P:diaminopimelate biosynthetic process"/>
    <property type="evidence" value="ECO:0007669"/>
    <property type="project" value="UniProtKB-UniRule"/>
</dbReference>
<dbReference type="GO" id="GO:0009089">
    <property type="term" value="P:lysine biosynthetic process via diaminopimelate"/>
    <property type="evidence" value="ECO:0007669"/>
    <property type="project" value="UniProtKB-UniRule"/>
</dbReference>
<dbReference type="CDD" id="cd00950">
    <property type="entry name" value="DHDPS"/>
    <property type="match status" value="1"/>
</dbReference>
<dbReference type="Gene3D" id="3.20.20.70">
    <property type="entry name" value="Aldolase class I"/>
    <property type="match status" value="1"/>
</dbReference>
<dbReference type="HAMAP" id="MF_00418">
    <property type="entry name" value="DapA"/>
    <property type="match status" value="1"/>
</dbReference>
<dbReference type="InterPro" id="IPR013785">
    <property type="entry name" value="Aldolase_TIM"/>
</dbReference>
<dbReference type="InterPro" id="IPR005263">
    <property type="entry name" value="DapA"/>
</dbReference>
<dbReference type="InterPro" id="IPR002220">
    <property type="entry name" value="DapA-like"/>
</dbReference>
<dbReference type="InterPro" id="IPR020625">
    <property type="entry name" value="Schiff_base-form_aldolases_AS"/>
</dbReference>
<dbReference type="NCBIfam" id="TIGR00674">
    <property type="entry name" value="dapA"/>
    <property type="match status" value="1"/>
</dbReference>
<dbReference type="PANTHER" id="PTHR12128:SF66">
    <property type="entry name" value="4-HYDROXY-2-OXOGLUTARATE ALDOLASE, MITOCHONDRIAL"/>
    <property type="match status" value="1"/>
</dbReference>
<dbReference type="PANTHER" id="PTHR12128">
    <property type="entry name" value="DIHYDRODIPICOLINATE SYNTHASE"/>
    <property type="match status" value="1"/>
</dbReference>
<dbReference type="Pfam" id="PF00701">
    <property type="entry name" value="DHDPS"/>
    <property type="match status" value="1"/>
</dbReference>
<dbReference type="PIRSF" id="PIRSF001365">
    <property type="entry name" value="DHDPS"/>
    <property type="match status" value="1"/>
</dbReference>
<dbReference type="PRINTS" id="PR00146">
    <property type="entry name" value="DHPICSNTHASE"/>
</dbReference>
<dbReference type="SMART" id="SM01130">
    <property type="entry name" value="DHDPS"/>
    <property type="match status" value="1"/>
</dbReference>
<dbReference type="SUPFAM" id="SSF51569">
    <property type="entry name" value="Aldolase"/>
    <property type="match status" value="1"/>
</dbReference>
<dbReference type="PROSITE" id="PS00666">
    <property type="entry name" value="DHDPS_2"/>
    <property type="match status" value="1"/>
</dbReference>
<evidence type="ECO:0000255" key="1">
    <source>
        <dbReference type="HAMAP-Rule" id="MF_00418"/>
    </source>
</evidence>
<evidence type="ECO:0000305" key="2"/>
<organism>
    <name type="scientific">Psychrobacter arcticus (strain DSM 17307 / VKM B-2377 / 273-4)</name>
    <dbReference type="NCBI Taxonomy" id="259536"/>
    <lineage>
        <taxon>Bacteria</taxon>
        <taxon>Pseudomonadati</taxon>
        <taxon>Pseudomonadota</taxon>
        <taxon>Gammaproteobacteria</taxon>
        <taxon>Moraxellales</taxon>
        <taxon>Moraxellaceae</taxon>
        <taxon>Psychrobacter</taxon>
    </lineage>
</organism>
<gene>
    <name evidence="1" type="primary">dapA</name>
    <name type="ordered locus">Psyc_0148</name>
</gene>
<protein>
    <recommendedName>
        <fullName evidence="1">4-hydroxy-tetrahydrodipicolinate synthase</fullName>
        <shortName evidence="1">HTPA synthase</shortName>
        <ecNumber evidence="1">4.3.3.7</ecNumber>
    </recommendedName>
</protein>
<reference key="1">
    <citation type="journal article" date="2010" name="Appl. Environ. Microbiol.">
        <title>The genome sequence of Psychrobacter arcticus 273-4, a psychroactive Siberian permafrost bacterium, reveals mechanisms for adaptation to low-temperature growth.</title>
        <authorList>
            <person name="Ayala-del-Rio H.L."/>
            <person name="Chain P.S."/>
            <person name="Grzymski J.J."/>
            <person name="Ponder M.A."/>
            <person name="Ivanova N."/>
            <person name="Bergholz P.W."/>
            <person name="Di Bartolo G."/>
            <person name="Hauser L."/>
            <person name="Land M."/>
            <person name="Bakermans C."/>
            <person name="Rodrigues D."/>
            <person name="Klappenbach J."/>
            <person name="Zarka D."/>
            <person name="Larimer F."/>
            <person name="Richardson P."/>
            <person name="Murray A."/>
            <person name="Thomashow M."/>
            <person name="Tiedje J.M."/>
        </authorList>
    </citation>
    <scope>NUCLEOTIDE SEQUENCE [LARGE SCALE GENOMIC DNA]</scope>
    <source>
        <strain>DSM 17307 / VKM B-2377 / 273-4</strain>
    </source>
</reference>
<comment type="function">
    <text evidence="1">Catalyzes the condensation of (S)-aspartate-beta-semialdehyde [(S)-ASA] and pyruvate to 4-hydroxy-tetrahydrodipicolinate (HTPA).</text>
</comment>
<comment type="catalytic activity">
    <reaction evidence="1">
        <text>L-aspartate 4-semialdehyde + pyruvate = (2S,4S)-4-hydroxy-2,3,4,5-tetrahydrodipicolinate + H2O + H(+)</text>
        <dbReference type="Rhea" id="RHEA:34171"/>
        <dbReference type="ChEBI" id="CHEBI:15361"/>
        <dbReference type="ChEBI" id="CHEBI:15377"/>
        <dbReference type="ChEBI" id="CHEBI:15378"/>
        <dbReference type="ChEBI" id="CHEBI:67139"/>
        <dbReference type="ChEBI" id="CHEBI:537519"/>
        <dbReference type="EC" id="4.3.3.7"/>
    </reaction>
</comment>
<comment type="pathway">
    <text evidence="1">Amino-acid biosynthesis; L-lysine biosynthesis via DAP pathway; (S)-tetrahydrodipicolinate from L-aspartate: step 3/4.</text>
</comment>
<comment type="subunit">
    <text evidence="1">Homotetramer; dimer of dimers.</text>
</comment>
<comment type="subcellular location">
    <subcellularLocation>
        <location evidence="1">Cytoplasm</location>
    </subcellularLocation>
</comment>
<comment type="similarity">
    <text evidence="1">Belongs to the DapA family.</text>
</comment>
<comment type="caution">
    <text evidence="2">Was originally thought to be a dihydrodipicolinate synthase (DHDPS), catalyzing the condensation of (S)-aspartate-beta-semialdehyde [(S)-ASA] and pyruvate to dihydrodipicolinate (DHDP). However, it was shown in E.coli that the product of the enzymatic reaction is not dihydrodipicolinate but in fact (4S)-4-hydroxy-2,3,4,5-tetrahydro-(2S)-dipicolinic acid (HTPA), and that the consecutive dehydration reaction leading to DHDP is not spontaneous but catalyzed by DapB.</text>
</comment>
<sequence>MSTAYDDIKTRLQGSMVALITPMLRDGTVDYKRLADLIDWQIEQGTHCLVAVGTTGESATLSMQEHSDVIRYFVQHVKGRVPVIAGTGANNTMEAIKLTQDAADAGADCALLVAPYYNKPPQEGLYQHYKAIAEAVNIPQMLYNVPGRTVVDIAQETVERLADLGNIVAIKDATGSVARGEQLIKVVGDRLVVLSGDDGSALELMKVGGKGNISVTANVVPKAMSETFTAALRGDFDAANQVHDVVKHLHRDLFIESSPIPAKYALHKMGMIDKGIRLPLVWLAEQHHATIDTALVRANLL</sequence>
<accession>Q4FVD6</accession>
<proteinExistence type="inferred from homology"/>
<feature type="chain" id="PRO_0000340981" description="4-hydroxy-tetrahydrodipicolinate synthase">
    <location>
        <begin position="1"/>
        <end position="301"/>
    </location>
</feature>
<feature type="active site" description="Proton donor/acceptor" evidence="1">
    <location>
        <position position="143"/>
    </location>
</feature>
<feature type="active site" description="Schiff-base intermediate with substrate" evidence="1">
    <location>
        <position position="171"/>
    </location>
</feature>
<feature type="binding site" evidence="1">
    <location>
        <position position="55"/>
    </location>
    <ligand>
        <name>pyruvate</name>
        <dbReference type="ChEBI" id="CHEBI:15361"/>
    </ligand>
</feature>
<feature type="binding site" evidence="1">
    <location>
        <position position="213"/>
    </location>
    <ligand>
        <name>pyruvate</name>
        <dbReference type="ChEBI" id="CHEBI:15361"/>
    </ligand>
</feature>
<feature type="site" description="Part of a proton relay during catalysis" evidence="1">
    <location>
        <position position="54"/>
    </location>
</feature>
<feature type="site" description="Part of a proton relay during catalysis" evidence="1">
    <location>
        <position position="117"/>
    </location>
</feature>